<name>HIS4_SALPC</name>
<dbReference type="EC" id="5.3.1.16" evidence="1"/>
<dbReference type="EMBL" id="CP000857">
    <property type="protein sequence ID" value="ACN45784.1"/>
    <property type="molecule type" value="Genomic_DNA"/>
</dbReference>
<dbReference type="RefSeq" id="WP_000586412.1">
    <property type="nucleotide sequence ID" value="NC_012125.1"/>
</dbReference>
<dbReference type="SMR" id="C0Q1J8"/>
<dbReference type="KEGG" id="sei:SPC_1636"/>
<dbReference type="HOGENOM" id="CLU_048577_1_2_6"/>
<dbReference type="UniPathway" id="UPA00031">
    <property type="reaction ID" value="UER00009"/>
</dbReference>
<dbReference type="Proteomes" id="UP000001599">
    <property type="component" value="Chromosome"/>
</dbReference>
<dbReference type="GO" id="GO:0005737">
    <property type="term" value="C:cytoplasm"/>
    <property type="evidence" value="ECO:0007669"/>
    <property type="project" value="UniProtKB-SubCell"/>
</dbReference>
<dbReference type="GO" id="GO:0003949">
    <property type="term" value="F:1-(5-phosphoribosyl)-5-[(5-phosphoribosylamino)methylideneamino]imidazole-4-carboxamide isomerase activity"/>
    <property type="evidence" value="ECO:0007669"/>
    <property type="project" value="UniProtKB-UniRule"/>
</dbReference>
<dbReference type="GO" id="GO:0000105">
    <property type="term" value="P:L-histidine biosynthetic process"/>
    <property type="evidence" value="ECO:0007669"/>
    <property type="project" value="UniProtKB-UniRule"/>
</dbReference>
<dbReference type="GO" id="GO:0000162">
    <property type="term" value="P:L-tryptophan biosynthetic process"/>
    <property type="evidence" value="ECO:0007669"/>
    <property type="project" value="TreeGrafter"/>
</dbReference>
<dbReference type="CDD" id="cd04732">
    <property type="entry name" value="HisA"/>
    <property type="match status" value="1"/>
</dbReference>
<dbReference type="FunFam" id="3.20.20.70:FF:000009">
    <property type="entry name" value="1-(5-phosphoribosyl)-5-[(5-phosphoribosylamino)methylideneamino] imidazole-4-carboxamide isomerase"/>
    <property type="match status" value="1"/>
</dbReference>
<dbReference type="Gene3D" id="3.20.20.70">
    <property type="entry name" value="Aldolase class I"/>
    <property type="match status" value="1"/>
</dbReference>
<dbReference type="HAMAP" id="MF_01014">
    <property type="entry name" value="HisA"/>
    <property type="match status" value="1"/>
</dbReference>
<dbReference type="InterPro" id="IPR013785">
    <property type="entry name" value="Aldolase_TIM"/>
</dbReference>
<dbReference type="InterPro" id="IPR006062">
    <property type="entry name" value="His_biosynth"/>
</dbReference>
<dbReference type="InterPro" id="IPR006063">
    <property type="entry name" value="HisA_bact_arch"/>
</dbReference>
<dbReference type="InterPro" id="IPR044524">
    <property type="entry name" value="Isoase_HisA-like"/>
</dbReference>
<dbReference type="InterPro" id="IPR023016">
    <property type="entry name" value="Isoase_HisA-like_bact"/>
</dbReference>
<dbReference type="InterPro" id="IPR011060">
    <property type="entry name" value="RibuloseP-bd_barrel"/>
</dbReference>
<dbReference type="NCBIfam" id="TIGR00007">
    <property type="entry name" value="1-(5-phosphoribosyl)-5-[(5-phosphoribosylamino)methylideneamino]imidazole-4-carboxamide isomerase"/>
    <property type="match status" value="1"/>
</dbReference>
<dbReference type="PANTHER" id="PTHR43090">
    <property type="entry name" value="1-(5-PHOSPHORIBOSYL)-5-[(5-PHOSPHORIBOSYLAMINO)METHYLIDENEAMINO] IMIDAZOLE-4-CARBOXAMIDE ISOMERASE"/>
    <property type="match status" value="1"/>
</dbReference>
<dbReference type="PANTHER" id="PTHR43090:SF2">
    <property type="entry name" value="1-(5-PHOSPHORIBOSYL)-5-[(5-PHOSPHORIBOSYLAMINO)METHYLIDENEAMINO] IMIDAZOLE-4-CARBOXAMIDE ISOMERASE"/>
    <property type="match status" value="1"/>
</dbReference>
<dbReference type="Pfam" id="PF00977">
    <property type="entry name" value="His_biosynth"/>
    <property type="match status" value="1"/>
</dbReference>
<dbReference type="SUPFAM" id="SSF51366">
    <property type="entry name" value="Ribulose-phoshate binding barrel"/>
    <property type="match status" value="1"/>
</dbReference>
<sequence length="245" mass="26115">MIIPALDLIDGTVVRLHQGDYARQREYGNDPLPRLQDYAAQGAGVLHLVDLTGAKDPAKRQIPLIKTLVAGVNVPVQVGGGVRTEEDVAALLKAGVARVVIGSTAVKSPDVVKGWFERFGAQALVLALDVRIDEHGNKQVAVSGWQENSGVSLEQLVETYLPVGLKHVLCTDISRDGTLAGSNVSLYEEVCARYPQIAFQSSGGIGNIDDIAALRGTGVRGVIVGRALLEGKFTVKEAIQCWQNV</sequence>
<feature type="chain" id="PRO_1000148986" description="1-(5-phosphoribosyl)-5-[(5-phosphoribosylamino)methylideneamino] imidazole-4-carboxamide isomerase">
    <location>
        <begin position="1"/>
        <end position="245"/>
    </location>
</feature>
<feature type="active site" description="Proton acceptor" evidence="1">
    <location>
        <position position="7"/>
    </location>
</feature>
<feature type="active site" description="Proton donor" evidence="1">
    <location>
        <position position="129"/>
    </location>
</feature>
<gene>
    <name evidence="1" type="primary">hisA</name>
    <name type="ordered locus">SPC_1636</name>
</gene>
<proteinExistence type="inferred from homology"/>
<comment type="catalytic activity">
    <reaction evidence="1">
        <text>1-(5-phospho-beta-D-ribosyl)-5-[(5-phospho-beta-D-ribosylamino)methylideneamino]imidazole-4-carboxamide = 5-[(5-phospho-1-deoxy-D-ribulos-1-ylimino)methylamino]-1-(5-phospho-beta-D-ribosyl)imidazole-4-carboxamide</text>
        <dbReference type="Rhea" id="RHEA:15469"/>
        <dbReference type="ChEBI" id="CHEBI:58435"/>
        <dbReference type="ChEBI" id="CHEBI:58525"/>
        <dbReference type="EC" id="5.3.1.16"/>
    </reaction>
</comment>
<comment type="pathway">
    <text evidence="1">Amino-acid biosynthesis; L-histidine biosynthesis; L-histidine from 5-phospho-alpha-D-ribose 1-diphosphate: step 4/9.</text>
</comment>
<comment type="subcellular location">
    <subcellularLocation>
        <location evidence="1">Cytoplasm</location>
    </subcellularLocation>
</comment>
<comment type="similarity">
    <text evidence="1">Belongs to the HisA/HisF family.</text>
</comment>
<evidence type="ECO:0000255" key="1">
    <source>
        <dbReference type="HAMAP-Rule" id="MF_01014"/>
    </source>
</evidence>
<organism>
    <name type="scientific">Salmonella paratyphi C (strain RKS4594)</name>
    <dbReference type="NCBI Taxonomy" id="476213"/>
    <lineage>
        <taxon>Bacteria</taxon>
        <taxon>Pseudomonadati</taxon>
        <taxon>Pseudomonadota</taxon>
        <taxon>Gammaproteobacteria</taxon>
        <taxon>Enterobacterales</taxon>
        <taxon>Enterobacteriaceae</taxon>
        <taxon>Salmonella</taxon>
    </lineage>
</organism>
<accession>C0Q1J8</accession>
<protein>
    <recommendedName>
        <fullName evidence="1">1-(5-phosphoribosyl)-5-[(5-phosphoribosylamino)methylideneamino] imidazole-4-carboxamide isomerase</fullName>
        <ecNumber evidence="1">5.3.1.16</ecNumber>
    </recommendedName>
    <alternativeName>
        <fullName evidence="1">Phosphoribosylformimino-5-aminoimidazole carboxamide ribotide isomerase</fullName>
    </alternativeName>
</protein>
<reference key="1">
    <citation type="journal article" date="2009" name="PLoS ONE">
        <title>Salmonella paratyphi C: genetic divergence from Salmonella choleraesuis and pathogenic convergence with Salmonella typhi.</title>
        <authorList>
            <person name="Liu W.-Q."/>
            <person name="Feng Y."/>
            <person name="Wang Y."/>
            <person name="Zou Q.-H."/>
            <person name="Chen F."/>
            <person name="Guo J.-T."/>
            <person name="Peng Y.-H."/>
            <person name="Jin Y."/>
            <person name="Li Y.-G."/>
            <person name="Hu S.-N."/>
            <person name="Johnston R.N."/>
            <person name="Liu G.-R."/>
            <person name="Liu S.-L."/>
        </authorList>
    </citation>
    <scope>NUCLEOTIDE SEQUENCE [LARGE SCALE GENOMIC DNA]</scope>
    <source>
        <strain>RKS4594</strain>
    </source>
</reference>
<keyword id="KW-0028">Amino-acid biosynthesis</keyword>
<keyword id="KW-0963">Cytoplasm</keyword>
<keyword id="KW-0368">Histidine biosynthesis</keyword>
<keyword id="KW-0413">Isomerase</keyword>